<name>RISB_METKA</name>
<comment type="function">
    <text evidence="1">Catalyzes the formation of 6,7-dimethyl-8-ribityllumazine by condensation of 5-amino-6-(D-ribitylamino)uracil with 3,4-dihydroxy-2-butanone 4-phosphate. This is the penultimate step in the biosynthesis of riboflavin.</text>
</comment>
<comment type="catalytic activity">
    <reaction evidence="1">
        <text>(2S)-2-hydroxy-3-oxobutyl phosphate + 5-amino-6-(D-ribitylamino)uracil = 6,7-dimethyl-8-(1-D-ribityl)lumazine + phosphate + 2 H2O + H(+)</text>
        <dbReference type="Rhea" id="RHEA:26152"/>
        <dbReference type="ChEBI" id="CHEBI:15377"/>
        <dbReference type="ChEBI" id="CHEBI:15378"/>
        <dbReference type="ChEBI" id="CHEBI:15934"/>
        <dbReference type="ChEBI" id="CHEBI:43474"/>
        <dbReference type="ChEBI" id="CHEBI:58201"/>
        <dbReference type="ChEBI" id="CHEBI:58830"/>
        <dbReference type="EC" id="2.5.1.78"/>
    </reaction>
</comment>
<comment type="pathway">
    <text evidence="1">Cofactor biosynthesis; riboflavin biosynthesis; riboflavin from 2-hydroxy-3-oxobutyl phosphate and 5-amino-6-(D-ribitylamino)uracil: step 1/2.</text>
</comment>
<comment type="similarity">
    <text evidence="1">Belongs to the DMRL synthase family.</text>
</comment>
<keyword id="KW-1185">Reference proteome</keyword>
<keyword id="KW-0686">Riboflavin biosynthesis</keyword>
<keyword id="KW-0808">Transferase</keyword>
<organism>
    <name type="scientific">Methanopyrus kandleri (strain AV19 / DSM 6324 / JCM 9639 / NBRC 100938)</name>
    <dbReference type="NCBI Taxonomy" id="190192"/>
    <lineage>
        <taxon>Archaea</taxon>
        <taxon>Methanobacteriati</taxon>
        <taxon>Methanobacteriota</taxon>
        <taxon>Methanomada group</taxon>
        <taxon>Methanopyri</taxon>
        <taxon>Methanopyrales</taxon>
        <taxon>Methanopyraceae</taxon>
        <taxon>Methanopyrus</taxon>
    </lineage>
</organism>
<evidence type="ECO:0000255" key="1">
    <source>
        <dbReference type="HAMAP-Rule" id="MF_00178"/>
    </source>
</evidence>
<feature type="chain" id="PRO_0000134844" description="6,7-dimethyl-8-ribityllumazine synthase">
    <location>
        <begin position="1"/>
        <end position="141"/>
    </location>
</feature>
<feature type="active site" description="Proton donor" evidence="1">
    <location>
        <position position="77"/>
    </location>
</feature>
<feature type="binding site" evidence="1">
    <location>
        <position position="13"/>
    </location>
    <ligand>
        <name>5-amino-6-(D-ribitylamino)uracil</name>
        <dbReference type="ChEBI" id="CHEBI:15934"/>
    </ligand>
</feature>
<feature type="binding site" evidence="1">
    <location>
        <begin position="45"/>
        <end position="47"/>
    </location>
    <ligand>
        <name>5-amino-6-(D-ribitylamino)uracil</name>
        <dbReference type="ChEBI" id="CHEBI:15934"/>
    </ligand>
</feature>
<feature type="binding site" evidence="1">
    <location>
        <begin position="69"/>
        <end position="71"/>
    </location>
    <ligand>
        <name>5-amino-6-(D-ribitylamino)uracil</name>
        <dbReference type="ChEBI" id="CHEBI:15934"/>
    </ligand>
</feature>
<feature type="binding site" evidence="1">
    <location>
        <begin position="74"/>
        <end position="75"/>
    </location>
    <ligand>
        <name>(2S)-2-hydroxy-3-oxobutyl phosphate</name>
        <dbReference type="ChEBI" id="CHEBI:58830"/>
    </ligand>
</feature>
<feature type="binding site" evidence="1">
    <location>
        <position position="102"/>
    </location>
    <ligand>
        <name>5-amino-6-(D-ribitylamino)uracil</name>
        <dbReference type="ChEBI" id="CHEBI:15934"/>
    </ligand>
</feature>
<feature type="binding site" evidence="1">
    <location>
        <position position="117"/>
    </location>
    <ligand>
        <name>(2S)-2-hydroxy-3-oxobutyl phosphate</name>
        <dbReference type="ChEBI" id="CHEBI:58830"/>
    </ligand>
</feature>
<gene>
    <name evidence="1" type="primary">ribH</name>
    <name type="ordered locus">MK0281</name>
</gene>
<sequence>MSEIRLGLVVTEFNREITYAMEELAVQHAKDLGAKVVERVLVPGSFEVPLAVRKLLERDDIDAVVTLGAIIKGDTDHDQAIAQQAFRKIQDLMVEYGKPVALGISGPGMTRMEALERVHYAKRAVEAAVKMVRRLRELEGE</sequence>
<reference key="1">
    <citation type="journal article" date="2002" name="Proc. Natl. Acad. Sci. U.S.A.">
        <title>The complete genome of hyperthermophile Methanopyrus kandleri AV19 and monophyly of archaeal methanogens.</title>
        <authorList>
            <person name="Slesarev A.I."/>
            <person name="Mezhevaya K.V."/>
            <person name="Makarova K.S."/>
            <person name="Polushin N.N."/>
            <person name="Shcherbinina O.V."/>
            <person name="Shakhova V.V."/>
            <person name="Belova G.I."/>
            <person name="Aravind L."/>
            <person name="Natale D.A."/>
            <person name="Rogozin I.B."/>
            <person name="Tatusov R.L."/>
            <person name="Wolf Y.I."/>
            <person name="Stetter K.O."/>
            <person name="Malykh A.G."/>
            <person name="Koonin E.V."/>
            <person name="Kozyavkin S.A."/>
        </authorList>
    </citation>
    <scope>NUCLEOTIDE SEQUENCE [LARGE SCALE GENOMIC DNA]</scope>
    <source>
        <strain>AV19 / DSM 6324 / JCM 9639 / NBRC 100938</strain>
    </source>
</reference>
<proteinExistence type="inferred from homology"/>
<protein>
    <recommendedName>
        <fullName evidence="1">6,7-dimethyl-8-ribityllumazine synthase</fullName>
        <shortName evidence="1">DMRL synthase</shortName>
        <shortName evidence="1">LS</shortName>
        <shortName evidence="1">Lumazine synthase</shortName>
        <ecNumber evidence="1">2.5.1.78</ecNumber>
    </recommendedName>
</protein>
<accession>Q8TYL5</accession>
<dbReference type="EC" id="2.5.1.78" evidence="1"/>
<dbReference type="EMBL" id="AE009439">
    <property type="protein sequence ID" value="AAM01498.1"/>
    <property type="molecule type" value="Genomic_DNA"/>
</dbReference>
<dbReference type="RefSeq" id="WP_011018653.1">
    <property type="nucleotide sequence ID" value="NC_003551.1"/>
</dbReference>
<dbReference type="SMR" id="Q8TYL5"/>
<dbReference type="FunCoup" id="Q8TYL5">
    <property type="interactions" value="90"/>
</dbReference>
<dbReference type="STRING" id="190192.MK0281"/>
<dbReference type="PaxDb" id="190192-MK0281"/>
<dbReference type="EnsemblBacteria" id="AAM01498">
    <property type="protein sequence ID" value="AAM01498"/>
    <property type="gene ID" value="MK0281"/>
</dbReference>
<dbReference type="GeneID" id="1477584"/>
<dbReference type="KEGG" id="mka:MK0281"/>
<dbReference type="PATRIC" id="fig|190192.8.peg.284"/>
<dbReference type="HOGENOM" id="CLU_089358_3_1_2"/>
<dbReference type="InParanoid" id="Q8TYL5"/>
<dbReference type="OrthoDB" id="7610at2157"/>
<dbReference type="BRENDA" id="2.5.1.78">
    <property type="organism ID" value="3274"/>
</dbReference>
<dbReference type="UniPathway" id="UPA00275">
    <property type="reaction ID" value="UER00404"/>
</dbReference>
<dbReference type="Proteomes" id="UP000001826">
    <property type="component" value="Chromosome"/>
</dbReference>
<dbReference type="GO" id="GO:0009349">
    <property type="term" value="C:riboflavin synthase complex"/>
    <property type="evidence" value="ECO:0007669"/>
    <property type="project" value="InterPro"/>
</dbReference>
<dbReference type="GO" id="GO:0000906">
    <property type="term" value="F:6,7-dimethyl-8-ribityllumazine synthase activity"/>
    <property type="evidence" value="ECO:0007669"/>
    <property type="project" value="UniProtKB-UniRule"/>
</dbReference>
<dbReference type="GO" id="GO:0009231">
    <property type="term" value="P:riboflavin biosynthetic process"/>
    <property type="evidence" value="ECO:0007669"/>
    <property type="project" value="UniProtKB-UniRule"/>
</dbReference>
<dbReference type="CDD" id="cd09211">
    <property type="entry name" value="Lumazine_synthase_archaeal"/>
    <property type="match status" value="1"/>
</dbReference>
<dbReference type="FunFam" id="3.40.50.960:FF:000003">
    <property type="entry name" value="6,7-dimethyl-8-ribityllumazine synthase"/>
    <property type="match status" value="1"/>
</dbReference>
<dbReference type="Gene3D" id="3.40.50.960">
    <property type="entry name" value="Lumazine/riboflavin synthase"/>
    <property type="match status" value="1"/>
</dbReference>
<dbReference type="HAMAP" id="MF_00178">
    <property type="entry name" value="Lumazine_synth"/>
    <property type="match status" value="1"/>
</dbReference>
<dbReference type="InterPro" id="IPR034964">
    <property type="entry name" value="LS"/>
</dbReference>
<dbReference type="InterPro" id="IPR002180">
    <property type="entry name" value="LS/RS"/>
</dbReference>
<dbReference type="InterPro" id="IPR036467">
    <property type="entry name" value="LS/RS_sf"/>
</dbReference>
<dbReference type="NCBIfam" id="TIGR00114">
    <property type="entry name" value="lumazine-synth"/>
    <property type="match status" value="1"/>
</dbReference>
<dbReference type="PANTHER" id="PTHR21058:SF0">
    <property type="entry name" value="6,7-DIMETHYL-8-RIBITYLLUMAZINE SYNTHASE"/>
    <property type="match status" value="1"/>
</dbReference>
<dbReference type="PANTHER" id="PTHR21058">
    <property type="entry name" value="6,7-DIMETHYL-8-RIBITYLLUMAZINE SYNTHASE DMRL SYNTHASE LUMAZINE SYNTHASE"/>
    <property type="match status" value="1"/>
</dbReference>
<dbReference type="Pfam" id="PF00885">
    <property type="entry name" value="DMRL_synthase"/>
    <property type="match status" value="1"/>
</dbReference>
<dbReference type="SUPFAM" id="SSF52121">
    <property type="entry name" value="Lumazine synthase"/>
    <property type="match status" value="1"/>
</dbReference>